<keyword id="KW-0030">Aminoacyl-tRNA synthetase</keyword>
<keyword id="KW-0067">ATP-binding</keyword>
<keyword id="KW-0963">Cytoplasm</keyword>
<keyword id="KW-0436">Ligase</keyword>
<keyword id="KW-0547">Nucleotide-binding</keyword>
<keyword id="KW-0648">Protein biosynthesis</keyword>
<protein>
    <recommendedName>
        <fullName evidence="1">Aspartate--tRNA(Asp/Asn) ligase</fullName>
        <ecNumber evidence="1">6.1.1.23</ecNumber>
    </recommendedName>
    <alternativeName>
        <fullName evidence="1">Aspartyl-tRNA synthetase</fullName>
        <shortName evidence="1">AspRS</shortName>
    </alternativeName>
    <alternativeName>
        <fullName evidence="1">Non-discriminating aspartyl-tRNA synthetase</fullName>
        <shortName evidence="1">ND-AspRS</shortName>
    </alternativeName>
</protein>
<proteinExistence type="inferred from homology"/>
<comment type="function">
    <text evidence="1">Aspartyl-tRNA synthetase with relaxed tRNA specificity since it is able to aspartylate not only its cognate tRNA(Asp) but also tRNA(Asn). Reaction proceeds in two steps: L-aspartate is first activated by ATP to form Asp-AMP and then transferred to the acceptor end of tRNA(Asp/Asn).</text>
</comment>
<comment type="catalytic activity">
    <reaction evidence="1">
        <text>tRNA(Asx) + L-aspartate + ATP = L-aspartyl-tRNA(Asx) + AMP + diphosphate</text>
        <dbReference type="Rhea" id="RHEA:18349"/>
        <dbReference type="Rhea" id="RHEA-COMP:9710"/>
        <dbReference type="Rhea" id="RHEA-COMP:9711"/>
        <dbReference type="ChEBI" id="CHEBI:29991"/>
        <dbReference type="ChEBI" id="CHEBI:30616"/>
        <dbReference type="ChEBI" id="CHEBI:33019"/>
        <dbReference type="ChEBI" id="CHEBI:78442"/>
        <dbReference type="ChEBI" id="CHEBI:78516"/>
        <dbReference type="ChEBI" id="CHEBI:456215"/>
        <dbReference type="EC" id="6.1.1.23"/>
    </reaction>
</comment>
<comment type="subunit">
    <text evidence="1">Homodimer.</text>
</comment>
<comment type="subcellular location">
    <subcellularLocation>
        <location evidence="1">Cytoplasm</location>
    </subcellularLocation>
</comment>
<comment type="similarity">
    <text evidence="1">Belongs to the class-II aminoacyl-tRNA synthetase family. Type 1 subfamily.</text>
</comment>
<accession>B7GWN1</accession>
<dbReference type="EC" id="6.1.1.23" evidence="1"/>
<dbReference type="EMBL" id="CP001172">
    <property type="protein sequence ID" value="ACJ56458.1"/>
    <property type="molecule type" value="Genomic_DNA"/>
</dbReference>
<dbReference type="RefSeq" id="WP_000986451.1">
    <property type="nucleotide sequence ID" value="NZ_CP001172.1"/>
</dbReference>
<dbReference type="SMR" id="B7GWN1"/>
<dbReference type="GeneID" id="92895173"/>
<dbReference type="HOGENOM" id="CLU_014330_3_2_6"/>
<dbReference type="Proteomes" id="UP000006924">
    <property type="component" value="Chromosome"/>
</dbReference>
<dbReference type="GO" id="GO:0005737">
    <property type="term" value="C:cytoplasm"/>
    <property type="evidence" value="ECO:0007669"/>
    <property type="project" value="UniProtKB-SubCell"/>
</dbReference>
<dbReference type="GO" id="GO:0004815">
    <property type="term" value="F:aspartate-tRNA ligase activity"/>
    <property type="evidence" value="ECO:0007669"/>
    <property type="project" value="UniProtKB-UniRule"/>
</dbReference>
<dbReference type="GO" id="GO:0050560">
    <property type="term" value="F:aspartate-tRNA(Asn) ligase activity"/>
    <property type="evidence" value="ECO:0007669"/>
    <property type="project" value="UniProtKB-EC"/>
</dbReference>
<dbReference type="GO" id="GO:0005524">
    <property type="term" value="F:ATP binding"/>
    <property type="evidence" value="ECO:0007669"/>
    <property type="project" value="UniProtKB-UniRule"/>
</dbReference>
<dbReference type="GO" id="GO:0003676">
    <property type="term" value="F:nucleic acid binding"/>
    <property type="evidence" value="ECO:0007669"/>
    <property type="project" value="InterPro"/>
</dbReference>
<dbReference type="GO" id="GO:0006422">
    <property type="term" value="P:aspartyl-tRNA aminoacylation"/>
    <property type="evidence" value="ECO:0007669"/>
    <property type="project" value="UniProtKB-UniRule"/>
</dbReference>
<dbReference type="CDD" id="cd00777">
    <property type="entry name" value="AspRS_core"/>
    <property type="match status" value="1"/>
</dbReference>
<dbReference type="CDD" id="cd04317">
    <property type="entry name" value="EcAspRS_like_N"/>
    <property type="match status" value="1"/>
</dbReference>
<dbReference type="Gene3D" id="3.30.930.10">
    <property type="entry name" value="Bira Bifunctional Protein, Domain 2"/>
    <property type="match status" value="1"/>
</dbReference>
<dbReference type="Gene3D" id="3.30.1360.30">
    <property type="entry name" value="GAD-like domain"/>
    <property type="match status" value="1"/>
</dbReference>
<dbReference type="Gene3D" id="2.40.50.140">
    <property type="entry name" value="Nucleic acid-binding proteins"/>
    <property type="match status" value="1"/>
</dbReference>
<dbReference type="HAMAP" id="MF_00044">
    <property type="entry name" value="Asp_tRNA_synth_type1"/>
    <property type="match status" value="1"/>
</dbReference>
<dbReference type="InterPro" id="IPR004364">
    <property type="entry name" value="Aa-tRNA-synt_II"/>
</dbReference>
<dbReference type="InterPro" id="IPR006195">
    <property type="entry name" value="aa-tRNA-synth_II"/>
</dbReference>
<dbReference type="InterPro" id="IPR045864">
    <property type="entry name" value="aa-tRNA-synth_II/BPL/LPL"/>
</dbReference>
<dbReference type="InterPro" id="IPR004524">
    <property type="entry name" value="Asp-tRNA-ligase_1"/>
</dbReference>
<dbReference type="InterPro" id="IPR047089">
    <property type="entry name" value="Asp-tRNA-ligase_1_N"/>
</dbReference>
<dbReference type="InterPro" id="IPR002312">
    <property type="entry name" value="Asp/Asn-tRNA-synth_IIb"/>
</dbReference>
<dbReference type="InterPro" id="IPR047090">
    <property type="entry name" value="AspRS_core"/>
</dbReference>
<dbReference type="InterPro" id="IPR004115">
    <property type="entry name" value="GAD-like_sf"/>
</dbReference>
<dbReference type="InterPro" id="IPR029351">
    <property type="entry name" value="GAD_dom"/>
</dbReference>
<dbReference type="InterPro" id="IPR012340">
    <property type="entry name" value="NA-bd_OB-fold"/>
</dbReference>
<dbReference type="InterPro" id="IPR004365">
    <property type="entry name" value="NA-bd_OB_tRNA"/>
</dbReference>
<dbReference type="NCBIfam" id="TIGR00459">
    <property type="entry name" value="aspS_bact"/>
    <property type="match status" value="1"/>
</dbReference>
<dbReference type="NCBIfam" id="NF001750">
    <property type="entry name" value="PRK00476.1"/>
    <property type="match status" value="1"/>
</dbReference>
<dbReference type="PANTHER" id="PTHR22594:SF5">
    <property type="entry name" value="ASPARTATE--TRNA LIGASE, MITOCHONDRIAL"/>
    <property type="match status" value="1"/>
</dbReference>
<dbReference type="PANTHER" id="PTHR22594">
    <property type="entry name" value="ASPARTYL/LYSYL-TRNA SYNTHETASE"/>
    <property type="match status" value="1"/>
</dbReference>
<dbReference type="Pfam" id="PF02938">
    <property type="entry name" value="GAD"/>
    <property type="match status" value="1"/>
</dbReference>
<dbReference type="Pfam" id="PF00152">
    <property type="entry name" value="tRNA-synt_2"/>
    <property type="match status" value="1"/>
</dbReference>
<dbReference type="Pfam" id="PF01336">
    <property type="entry name" value="tRNA_anti-codon"/>
    <property type="match status" value="1"/>
</dbReference>
<dbReference type="PRINTS" id="PR01042">
    <property type="entry name" value="TRNASYNTHASP"/>
</dbReference>
<dbReference type="SUPFAM" id="SSF55681">
    <property type="entry name" value="Class II aaRS and biotin synthetases"/>
    <property type="match status" value="1"/>
</dbReference>
<dbReference type="SUPFAM" id="SSF55261">
    <property type="entry name" value="GAD domain-like"/>
    <property type="match status" value="1"/>
</dbReference>
<dbReference type="SUPFAM" id="SSF50249">
    <property type="entry name" value="Nucleic acid-binding proteins"/>
    <property type="match status" value="1"/>
</dbReference>
<dbReference type="PROSITE" id="PS50862">
    <property type="entry name" value="AA_TRNA_LIGASE_II"/>
    <property type="match status" value="1"/>
</dbReference>
<name>SYDND_ACIB3</name>
<reference key="1">
    <citation type="journal article" date="2008" name="J. Bacteriol.">
        <title>Comparative genome sequence analysis of multidrug-resistant Acinetobacter baumannii.</title>
        <authorList>
            <person name="Adams M.D."/>
            <person name="Goglin K."/>
            <person name="Molyneaux N."/>
            <person name="Hujer K.M."/>
            <person name="Lavender H."/>
            <person name="Jamison J.J."/>
            <person name="MacDonald I.J."/>
            <person name="Martin K.M."/>
            <person name="Russo T."/>
            <person name="Campagnari A.A."/>
            <person name="Hujer A.M."/>
            <person name="Bonomo R.A."/>
            <person name="Gill S.R."/>
        </authorList>
    </citation>
    <scope>NUCLEOTIDE SEQUENCE [LARGE SCALE GENOMIC DNA]</scope>
    <source>
        <strain>AB307-0294</strain>
    </source>
</reference>
<evidence type="ECO:0000255" key="1">
    <source>
        <dbReference type="HAMAP-Rule" id="MF_00044"/>
    </source>
</evidence>
<feature type="chain" id="PRO_1000198947" description="Aspartate--tRNA(Asp/Asn) ligase">
    <location>
        <begin position="1"/>
        <end position="592"/>
    </location>
</feature>
<feature type="region of interest" description="Aspartate" evidence="1">
    <location>
        <begin position="199"/>
        <end position="202"/>
    </location>
</feature>
<feature type="binding site" evidence="1">
    <location>
        <position position="175"/>
    </location>
    <ligand>
        <name>L-aspartate</name>
        <dbReference type="ChEBI" id="CHEBI:29991"/>
    </ligand>
</feature>
<feature type="binding site" evidence="1">
    <location>
        <begin position="221"/>
        <end position="223"/>
    </location>
    <ligand>
        <name>ATP</name>
        <dbReference type="ChEBI" id="CHEBI:30616"/>
    </ligand>
</feature>
<feature type="binding site" evidence="1">
    <location>
        <position position="221"/>
    </location>
    <ligand>
        <name>L-aspartate</name>
        <dbReference type="ChEBI" id="CHEBI:29991"/>
    </ligand>
</feature>
<feature type="binding site" evidence="1">
    <location>
        <position position="230"/>
    </location>
    <ligand>
        <name>ATP</name>
        <dbReference type="ChEBI" id="CHEBI:30616"/>
    </ligand>
</feature>
<feature type="binding site" evidence="1">
    <location>
        <position position="450"/>
    </location>
    <ligand>
        <name>L-aspartate</name>
        <dbReference type="ChEBI" id="CHEBI:29991"/>
    </ligand>
</feature>
<feature type="binding site" evidence="1">
    <location>
        <position position="483"/>
    </location>
    <ligand>
        <name>ATP</name>
        <dbReference type="ChEBI" id="CHEBI:30616"/>
    </ligand>
</feature>
<feature type="binding site" evidence="1">
    <location>
        <position position="490"/>
    </location>
    <ligand>
        <name>L-aspartate</name>
        <dbReference type="ChEBI" id="CHEBI:29991"/>
    </ligand>
</feature>
<feature type="binding site" evidence="1">
    <location>
        <begin position="535"/>
        <end position="538"/>
    </location>
    <ligand>
        <name>ATP</name>
        <dbReference type="ChEBI" id="CHEBI:30616"/>
    </ligand>
</feature>
<feature type="site" description="Important for tRNA non-discrimination" evidence="1">
    <location>
        <position position="31"/>
    </location>
</feature>
<feature type="site" description="Important for tRNA non-discrimination" evidence="1">
    <location>
        <position position="82"/>
    </location>
</feature>
<sequence>MMRTHYCGSLTEAQIDQTVTLCGWVHRRRDHGGVIFLDMRDRDGLVQVVIDPDTPEAFATADKARSEYVLKITGRVRRRYEGTENPNMVSGQIEVLGKEIEVLAASETPPFPLNDDTINVSEEHRLKYRFLDIRRPEMLERLRFRSKVTNLIRNYLDDHGFLDVETPILTRATPEGARDYLVPSRVQNGSFYALPQSPQLFKQLLMVGGIDRYYQIAKCFRDEDLRADRQPEFTQIDIETSFLNDDDIMDLMEGMTVKLFNDLLGVKFEKFRRMPYSEAMRDYASDKPDLRIPLKLVDVADLMQEVEFKVFAGPAKDPKGRIAALRVPGAGSLTRSQIDEYTKFVGIYGAKGLAYIKVNEIEKGIEGLQSPIVKFIEPIVMQLLERVGAENGDIVFFGADKAKIVNDAMGALRVKIGHDLNLATCEWAPLWVVDFPMFEETDDGKWTSVHHPFTLPKSSVEDVKSNPGEALSVAYDMVLNGTEVGGGSLRIYTLEMQKAIFEALGISDEEAEEKFSFLLNALRYGAPPHGGLAFGLDRLVMLMTGATSIRDVIAFPKTKTAECPLTQAPAPVEANQLRDLGIRLREQQKKEA</sequence>
<organism>
    <name type="scientific">Acinetobacter baumannii (strain AB307-0294)</name>
    <dbReference type="NCBI Taxonomy" id="557600"/>
    <lineage>
        <taxon>Bacteria</taxon>
        <taxon>Pseudomonadati</taxon>
        <taxon>Pseudomonadota</taxon>
        <taxon>Gammaproteobacteria</taxon>
        <taxon>Moraxellales</taxon>
        <taxon>Moraxellaceae</taxon>
        <taxon>Acinetobacter</taxon>
        <taxon>Acinetobacter calcoaceticus/baumannii complex</taxon>
    </lineage>
</organism>
<gene>
    <name evidence="1" type="primary">aspS</name>
    <name type="ordered locus">ABBFA_000568</name>
</gene>